<gene>
    <name evidence="11" type="primary">PLAAT1</name>
    <name type="synonym">HRASLS</name>
</gene>
<accession>Q9HDD0</accession>
<accession>D2KX19</accession>
<accession>Q6X7C0</accession>
<accession>Q86WS9</accession>
<accession>X6R3D1</accession>
<reference key="1">
    <citation type="submission" date="1999-08" db="EMBL/GenBank/DDBJ databases">
        <authorList>
            <person name="Kato S."/>
        </authorList>
    </citation>
    <scope>NUCLEOTIDE SEQUENCE [MRNA] (ISOFORM 1)</scope>
</reference>
<reference key="2">
    <citation type="submission" date="2003-03" db="EMBL/GenBank/DDBJ databases">
        <title>A new spermatogenesis-related gene.</title>
        <authorList>
            <person name="Wu N."/>
            <person name="Miao S.Y."/>
            <person name="Zhang X.D."/>
            <person name="Qiao Y."/>
            <person name="Liang G."/>
            <person name="Wang L.F."/>
        </authorList>
    </citation>
    <scope>NUCLEOTIDE SEQUENCE [MRNA] (ISOFORM 1)</scope>
    <source>
        <tissue>Testis</tissue>
    </source>
</reference>
<reference key="3">
    <citation type="journal article" date="2011" name="J. Lipid Res.">
        <title>Enzymological analysis of the tumor suppressor A-C1 reveals a novel group of phospholipid-metabolizing enzymes.</title>
        <authorList>
            <person name="Shinohara N."/>
            <person name="Uyama T."/>
            <person name="Jin X.H."/>
            <person name="Tsuboi K."/>
            <person name="Tonai T."/>
            <person name="Houchi H."/>
            <person name="Ueda N."/>
        </authorList>
    </citation>
    <scope>NUCLEOTIDE SEQUENCE [MRNA] (ISOFORM 1)</scope>
    <scope>FUNCTION (ISOFORM 1)</scope>
    <scope>TISSUE SPECIFICITY (ISOFORM 1)</scope>
    <scope>CATALYTIC ACTIVITY (ISOFORM 1)</scope>
</reference>
<reference key="4">
    <citation type="journal article" date="2006" name="Nature">
        <title>The DNA sequence, annotation and analysis of human chromosome 3.</title>
        <authorList>
            <person name="Muzny D.M."/>
            <person name="Scherer S.E."/>
            <person name="Kaul R."/>
            <person name="Wang J."/>
            <person name="Yu J."/>
            <person name="Sudbrak R."/>
            <person name="Buhay C.J."/>
            <person name="Chen R."/>
            <person name="Cree A."/>
            <person name="Ding Y."/>
            <person name="Dugan-Rocha S."/>
            <person name="Gill R."/>
            <person name="Gunaratne P."/>
            <person name="Harris R.A."/>
            <person name="Hawes A.C."/>
            <person name="Hernandez J."/>
            <person name="Hodgson A.V."/>
            <person name="Hume J."/>
            <person name="Jackson A."/>
            <person name="Khan Z.M."/>
            <person name="Kovar-Smith C."/>
            <person name="Lewis L.R."/>
            <person name="Lozado R.J."/>
            <person name="Metzker M.L."/>
            <person name="Milosavljevic A."/>
            <person name="Miner G.R."/>
            <person name="Morgan M.B."/>
            <person name="Nazareth L.V."/>
            <person name="Scott G."/>
            <person name="Sodergren E."/>
            <person name="Song X.-Z."/>
            <person name="Steffen D."/>
            <person name="Wei S."/>
            <person name="Wheeler D.A."/>
            <person name="Wright M.W."/>
            <person name="Worley K.C."/>
            <person name="Yuan Y."/>
            <person name="Zhang Z."/>
            <person name="Adams C.Q."/>
            <person name="Ansari-Lari M.A."/>
            <person name="Ayele M."/>
            <person name="Brown M.J."/>
            <person name="Chen G."/>
            <person name="Chen Z."/>
            <person name="Clendenning J."/>
            <person name="Clerc-Blankenburg K.P."/>
            <person name="Chen R."/>
            <person name="Chen Z."/>
            <person name="Davis C."/>
            <person name="Delgado O."/>
            <person name="Dinh H.H."/>
            <person name="Dong W."/>
            <person name="Draper H."/>
            <person name="Ernst S."/>
            <person name="Fu G."/>
            <person name="Gonzalez-Garay M.L."/>
            <person name="Garcia D.K."/>
            <person name="Gillett W."/>
            <person name="Gu J."/>
            <person name="Hao B."/>
            <person name="Haugen E."/>
            <person name="Havlak P."/>
            <person name="He X."/>
            <person name="Hennig S."/>
            <person name="Hu S."/>
            <person name="Huang W."/>
            <person name="Jackson L.R."/>
            <person name="Jacob L.S."/>
            <person name="Kelly S.H."/>
            <person name="Kube M."/>
            <person name="Levy R."/>
            <person name="Li Z."/>
            <person name="Liu B."/>
            <person name="Liu J."/>
            <person name="Liu W."/>
            <person name="Lu J."/>
            <person name="Maheshwari M."/>
            <person name="Nguyen B.-V."/>
            <person name="Okwuonu G.O."/>
            <person name="Palmeiri A."/>
            <person name="Pasternak S."/>
            <person name="Perez L.M."/>
            <person name="Phelps K.A."/>
            <person name="Plopper F.J."/>
            <person name="Qiang B."/>
            <person name="Raymond C."/>
            <person name="Rodriguez R."/>
            <person name="Saenphimmachak C."/>
            <person name="Santibanez J."/>
            <person name="Shen H."/>
            <person name="Shen Y."/>
            <person name="Subramanian S."/>
            <person name="Tabor P.E."/>
            <person name="Verduzco D."/>
            <person name="Waldron L."/>
            <person name="Wang J."/>
            <person name="Wang J."/>
            <person name="Wang Q."/>
            <person name="Williams G.A."/>
            <person name="Wong G.K.-S."/>
            <person name="Yao Z."/>
            <person name="Zhang J."/>
            <person name="Zhang X."/>
            <person name="Zhao G."/>
            <person name="Zhou J."/>
            <person name="Zhou Y."/>
            <person name="Nelson D."/>
            <person name="Lehrach H."/>
            <person name="Reinhardt R."/>
            <person name="Naylor S.L."/>
            <person name="Yang H."/>
            <person name="Olson M."/>
            <person name="Weinstock G."/>
            <person name="Gibbs R.A."/>
        </authorList>
    </citation>
    <scope>NUCLEOTIDE SEQUENCE [LARGE SCALE GENOMIC DNA]</scope>
</reference>
<reference key="5">
    <citation type="submission" date="2005-09" db="EMBL/GenBank/DDBJ databases">
        <authorList>
            <person name="Mural R.J."/>
            <person name="Istrail S."/>
            <person name="Sutton G."/>
            <person name="Florea L."/>
            <person name="Halpern A.L."/>
            <person name="Mobarry C.M."/>
            <person name="Lippert R."/>
            <person name="Walenz B."/>
            <person name="Shatkay H."/>
            <person name="Dew I."/>
            <person name="Miller J.R."/>
            <person name="Flanigan M.J."/>
            <person name="Edwards N.J."/>
            <person name="Bolanos R."/>
            <person name="Fasulo D."/>
            <person name="Halldorsson B.V."/>
            <person name="Hannenhalli S."/>
            <person name="Turner R."/>
            <person name="Yooseph S."/>
            <person name="Lu F."/>
            <person name="Nusskern D.R."/>
            <person name="Shue B.C."/>
            <person name="Zheng X.H."/>
            <person name="Zhong F."/>
            <person name="Delcher A.L."/>
            <person name="Huson D.H."/>
            <person name="Kravitz S.A."/>
            <person name="Mouchard L."/>
            <person name="Reinert K."/>
            <person name="Remington K.A."/>
            <person name="Clark A.G."/>
            <person name="Waterman M.S."/>
            <person name="Eichler E.E."/>
            <person name="Adams M.D."/>
            <person name="Hunkapiller M.W."/>
            <person name="Myers E.W."/>
            <person name="Venter J.C."/>
        </authorList>
    </citation>
    <scope>NUCLEOTIDE SEQUENCE [LARGE SCALE GENOMIC DNA]</scope>
</reference>
<reference key="6">
    <citation type="journal article" date="2004" name="Genome Res.">
        <title>The status, quality, and expansion of the NIH full-length cDNA project: the Mammalian Gene Collection (MGC).</title>
        <authorList>
            <consortium name="The MGC Project Team"/>
        </authorList>
    </citation>
    <scope>NUCLEOTIDE SEQUENCE [LARGE SCALE MRNA] (ISOFORM 1)</scope>
    <source>
        <tissue>Testis</tissue>
    </source>
</reference>
<reference key="7">
    <citation type="journal article" date="2012" name="J. Biol. Chem.">
        <title>Generation of N-acylphosphatidylethanolamine by members of the phospholipase A/acyltransferase (PLA/AT) family.</title>
        <authorList>
            <person name="Uyama T."/>
            <person name="Ikematsu N."/>
            <person name="Inoue M."/>
            <person name="Shinohara N."/>
            <person name="Jin X.H."/>
            <person name="Tsuboi K."/>
            <person name="Tonai T."/>
            <person name="Tokumura A."/>
            <person name="Ueda N."/>
        </authorList>
    </citation>
    <scope>FUNCTION (ISOFORM 1)</scope>
    <scope>CATALYTIC ACTIVITY (ISOFORM 1)</scope>
</reference>
<reference key="8">
    <citation type="journal article" date="2015" name="J. Biomed. Sci.">
        <title>The HRASLS (PLA/AT) subfamily of enzymes.</title>
        <authorList>
            <person name="Mardian E.B."/>
            <person name="Bradley R.M."/>
            <person name="Duncan R.E."/>
        </authorList>
    </citation>
    <scope>REVIEW</scope>
</reference>
<reference key="9">
    <citation type="journal article" date="2016" name="J. Lipid Res.">
        <title>Comparative analyses of isoforms of the calcium-independent phosphatidylethanolamine N-acyltransferase PLAAT-1 in humans and mice.</title>
        <authorList>
            <person name="Hussain Z."/>
            <person name="Uyama T."/>
            <person name="Kawai K."/>
            <person name="Rahman I.A."/>
            <person name="Tsuboi K."/>
            <person name="Araki N."/>
            <person name="Ueda N."/>
        </authorList>
    </citation>
    <scope>ALTERNATIVE SPLICING (ISOFORMS 1 AND 2)</scope>
    <scope>FUNCTION (ISOFORMS 1 AND 2)</scope>
    <scope>CATALYTIC ACTIVITY (ISOFORMS 1 AND 2)</scope>
    <scope>SUBCELLULAR LOCATION (ISOFORMS 1 AND 2)</scope>
    <scope>TISSUE SPECIFICITY (ISOFORM 2)</scope>
    <source>
        <tissue>Skeletal muscle</tissue>
    </source>
</reference>
<dbReference type="EC" id="2.3.1.-" evidence="4 5 6"/>
<dbReference type="EC" id="3.1.1.32" evidence="4 5 6"/>
<dbReference type="EC" id="3.1.1.4" evidence="4 5 6"/>
<dbReference type="EMBL" id="AB030816">
    <property type="protein sequence ID" value="BAB08110.1"/>
    <property type="molecule type" value="mRNA"/>
</dbReference>
<dbReference type="EMBL" id="AY251533">
    <property type="protein sequence ID" value="AAP20056.1"/>
    <property type="molecule type" value="mRNA"/>
</dbReference>
<dbReference type="EMBL" id="AB510981">
    <property type="protein sequence ID" value="BAI63210.1"/>
    <property type="molecule type" value="mRNA"/>
</dbReference>
<dbReference type="EMBL" id="AC105057">
    <property type="status" value="NOT_ANNOTATED_CDS"/>
    <property type="molecule type" value="Genomic_DNA"/>
</dbReference>
<dbReference type="EMBL" id="AC092966">
    <property type="status" value="NOT_ANNOTATED_CDS"/>
    <property type="molecule type" value="Genomic_DNA"/>
</dbReference>
<dbReference type="EMBL" id="CH471052">
    <property type="protein sequence ID" value="EAW78078.1"/>
    <property type="molecule type" value="Genomic_DNA"/>
</dbReference>
<dbReference type="EMBL" id="CH471052">
    <property type="protein sequence ID" value="EAW78079.1"/>
    <property type="molecule type" value="Genomic_DNA"/>
</dbReference>
<dbReference type="EMBL" id="BC048095">
    <property type="protein sequence ID" value="AAH48095.1"/>
    <property type="molecule type" value="mRNA"/>
</dbReference>
<dbReference type="CCDS" id="CCDS3303.3">
    <molecule id="Q9HDD0-1"/>
</dbReference>
<dbReference type="RefSeq" id="NP_001353041.1">
    <molecule id="Q9HDD0-1"/>
    <property type="nucleotide sequence ID" value="NM_001366112.1"/>
</dbReference>
<dbReference type="RefSeq" id="NP_065119.3">
    <molecule id="Q9HDD0-1"/>
    <property type="nucleotide sequence ID" value="NM_020386.5"/>
</dbReference>
<dbReference type="RefSeq" id="XP_016862412.1">
    <property type="nucleotide sequence ID" value="XM_017006923.1"/>
</dbReference>
<dbReference type="RefSeq" id="XP_047304582.1">
    <molecule id="Q9HDD0-1"/>
    <property type="nucleotide sequence ID" value="XM_047448626.1"/>
</dbReference>
<dbReference type="RefSeq" id="XP_054203332.1">
    <molecule id="Q9HDD0-1"/>
    <property type="nucleotide sequence ID" value="XM_054347357.1"/>
</dbReference>
<dbReference type="SMR" id="Q9HDD0"/>
<dbReference type="FunCoup" id="Q9HDD0">
    <property type="interactions" value="729"/>
</dbReference>
<dbReference type="IntAct" id="Q9HDD0">
    <property type="interactions" value="10"/>
</dbReference>
<dbReference type="STRING" id="9606.ENSP00000498228"/>
<dbReference type="SwissLipids" id="SLP:000000688"/>
<dbReference type="PhosphoSitePlus" id="Q9HDD0"/>
<dbReference type="BioMuta" id="HRASLS"/>
<dbReference type="DMDM" id="20138344"/>
<dbReference type="PaxDb" id="9606-ENSP00000264735"/>
<dbReference type="Antibodypedia" id="33880">
    <property type="antibodies" value="45 antibodies from 15 providers"/>
</dbReference>
<dbReference type="DNASU" id="57110"/>
<dbReference type="Ensembl" id="ENST00000264735.4">
    <molecule id="Q9HDD0-1"/>
    <property type="protein sequence ID" value="ENSP00000264735.4"/>
    <property type="gene ID" value="ENSG00000127252.7"/>
</dbReference>
<dbReference type="Ensembl" id="ENST00000650797.1">
    <molecule id="Q9HDD0-2"/>
    <property type="protein sequence ID" value="ENSP00000498228.1"/>
    <property type="gene ID" value="ENSG00000127252.7"/>
</dbReference>
<dbReference type="GeneID" id="57110"/>
<dbReference type="KEGG" id="hsa:57110"/>
<dbReference type="MANE-Select" id="ENST00000264735.4">
    <property type="protein sequence ID" value="ENSP00000264735.4"/>
    <property type="RefSeq nucleotide sequence ID" value="NM_020386.5"/>
    <property type="RefSeq protein sequence ID" value="NP_065119.3"/>
</dbReference>
<dbReference type="UCSC" id="uc003fta.5">
    <property type="organism name" value="human"/>
</dbReference>
<dbReference type="AGR" id="HGNC:14922"/>
<dbReference type="CTD" id="57110"/>
<dbReference type="DisGeNET" id="57110"/>
<dbReference type="GeneCards" id="PLAAT1"/>
<dbReference type="HGNC" id="HGNC:14922">
    <property type="gene designation" value="PLAAT1"/>
</dbReference>
<dbReference type="HPA" id="ENSG00000127252">
    <property type="expression patterns" value="Group enriched (skeletal muscle, testis, tongue)"/>
</dbReference>
<dbReference type="MIM" id="606487">
    <property type="type" value="gene"/>
</dbReference>
<dbReference type="neXtProt" id="NX_Q9HDD0"/>
<dbReference type="OpenTargets" id="ENSG00000127252"/>
<dbReference type="PharmGKB" id="PA29445"/>
<dbReference type="VEuPathDB" id="HostDB:ENSG00000127252"/>
<dbReference type="eggNOG" id="ENOG502QU0S">
    <property type="taxonomic scope" value="Eukaryota"/>
</dbReference>
<dbReference type="GeneTree" id="ENSGT00940000156634"/>
<dbReference type="HOGENOM" id="CLU_1019273_0_0_1"/>
<dbReference type="InParanoid" id="Q9HDD0"/>
<dbReference type="OrthoDB" id="421951at2759"/>
<dbReference type="PAN-GO" id="Q9HDD0">
    <property type="GO annotations" value="5 GO annotations based on evolutionary models"/>
</dbReference>
<dbReference type="PhylomeDB" id="Q9HDD0"/>
<dbReference type="TreeFam" id="TF330836"/>
<dbReference type="BioCyc" id="MetaCyc:ENSG00000127252-MONOMER"/>
<dbReference type="PathwayCommons" id="Q9HDD0"/>
<dbReference type="Reactome" id="R-HSA-1482839">
    <property type="pathway name" value="Acyl chain remodelling of PE"/>
</dbReference>
<dbReference type="SignaLink" id="Q9HDD0"/>
<dbReference type="BioGRID-ORCS" id="57110">
    <property type="hits" value="15 hits in 1149 CRISPR screens"/>
</dbReference>
<dbReference type="ChiTaRS" id="HRASLS">
    <property type="organism name" value="human"/>
</dbReference>
<dbReference type="GenomeRNAi" id="57110"/>
<dbReference type="Pharos" id="Q9HDD0">
    <property type="development level" value="Tbio"/>
</dbReference>
<dbReference type="PRO" id="PR:Q9HDD0"/>
<dbReference type="Proteomes" id="UP000005640">
    <property type="component" value="Chromosome 3"/>
</dbReference>
<dbReference type="RNAct" id="Q9HDD0">
    <property type="molecule type" value="protein"/>
</dbReference>
<dbReference type="Bgee" id="ENSG00000127252">
    <property type="expression patterns" value="Expressed in sperm and 162 other cell types or tissues"/>
</dbReference>
<dbReference type="ExpressionAtlas" id="Q9HDD0">
    <property type="expression patterns" value="baseline and differential"/>
</dbReference>
<dbReference type="GO" id="GO:0005737">
    <property type="term" value="C:cytoplasm"/>
    <property type="evidence" value="ECO:0000314"/>
    <property type="project" value="UniProtKB"/>
</dbReference>
<dbReference type="GO" id="GO:0005829">
    <property type="term" value="C:cytosol"/>
    <property type="evidence" value="ECO:0000250"/>
    <property type="project" value="UniProtKB"/>
</dbReference>
<dbReference type="GO" id="GO:0005783">
    <property type="term" value="C:endoplasmic reticulum"/>
    <property type="evidence" value="ECO:0000250"/>
    <property type="project" value="UniProtKB"/>
</dbReference>
<dbReference type="GO" id="GO:0005764">
    <property type="term" value="C:lysosome"/>
    <property type="evidence" value="ECO:0000250"/>
    <property type="project" value="UniProtKB"/>
</dbReference>
<dbReference type="GO" id="GO:0016020">
    <property type="term" value="C:membrane"/>
    <property type="evidence" value="ECO:0007669"/>
    <property type="project" value="UniProtKB-SubCell"/>
</dbReference>
<dbReference type="GO" id="GO:0005739">
    <property type="term" value="C:mitochondrion"/>
    <property type="evidence" value="ECO:0000250"/>
    <property type="project" value="UniProtKB"/>
</dbReference>
<dbReference type="GO" id="GO:0005641">
    <property type="term" value="C:nuclear envelope lumen"/>
    <property type="evidence" value="ECO:0000250"/>
    <property type="project" value="UniProtKB"/>
</dbReference>
<dbReference type="GO" id="GO:0005634">
    <property type="term" value="C:nucleus"/>
    <property type="evidence" value="ECO:0000314"/>
    <property type="project" value="UniProtKB"/>
</dbReference>
<dbReference type="GO" id="GO:0016410">
    <property type="term" value="F:N-acyltransferase activity"/>
    <property type="evidence" value="ECO:0000314"/>
    <property type="project" value="UniProtKB"/>
</dbReference>
<dbReference type="GO" id="GO:0008374">
    <property type="term" value="F:O-acyltransferase activity"/>
    <property type="evidence" value="ECO:0000314"/>
    <property type="project" value="UniProtKB"/>
</dbReference>
<dbReference type="GO" id="GO:0008970">
    <property type="term" value="F:phospholipase A1 activity"/>
    <property type="evidence" value="ECO:0000314"/>
    <property type="project" value="UniProtKB"/>
</dbReference>
<dbReference type="GO" id="GO:0004623">
    <property type="term" value="F:phospholipase A2 activity"/>
    <property type="evidence" value="ECO:0000314"/>
    <property type="project" value="UniProtKB"/>
</dbReference>
<dbReference type="GO" id="GO:0070306">
    <property type="term" value="P:lens fiber cell differentiation"/>
    <property type="evidence" value="ECO:0000250"/>
    <property type="project" value="UniProtKB"/>
</dbReference>
<dbReference type="GO" id="GO:0016042">
    <property type="term" value="P:lipid catabolic process"/>
    <property type="evidence" value="ECO:0007669"/>
    <property type="project" value="UniProtKB-KW"/>
</dbReference>
<dbReference type="GO" id="GO:0070292">
    <property type="term" value="P:N-acylphosphatidylethanolamine metabolic process"/>
    <property type="evidence" value="ECO:0000314"/>
    <property type="project" value="UniProtKB"/>
</dbReference>
<dbReference type="GO" id="GO:1903008">
    <property type="term" value="P:organelle disassembly"/>
    <property type="evidence" value="ECO:0000250"/>
    <property type="project" value="UniProtKB"/>
</dbReference>
<dbReference type="GO" id="GO:0046470">
    <property type="term" value="P:phosphatidylcholine metabolic process"/>
    <property type="evidence" value="ECO:0000314"/>
    <property type="project" value="UniProtKB"/>
</dbReference>
<dbReference type="FunFam" id="3.90.1720.10:FF:000002">
    <property type="entry name" value="HRAS like suppressor 2"/>
    <property type="match status" value="1"/>
</dbReference>
<dbReference type="Gene3D" id="3.90.1720.10">
    <property type="entry name" value="endopeptidase domain like (from Nostoc punctiforme)"/>
    <property type="match status" value="1"/>
</dbReference>
<dbReference type="InterPro" id="IPR051496">
    <property type="entry name" value="H-rev107_PLA/AT"/>
</dbReference>
<dbReference type="InterPro" id="IPR007053">
    <property type="entry name" value="LRAT_dom"/>
</dbReference>
<dbReference type="PANTHER" id="PTHR13943">
    <property type="entry name" value="HRAS-LIKE SUPPRESSOR - RELATED"/>
    <property type="match status" value="1"/>
</dbReference>
<dbReference type="PANTHER" id="PTHR13943:SF37">
    <property type="entry name" value="PHOSPHOLIPASE A AND ACYLTRANSFERASE 1"/>
    <property type="match status" value="1"/>
</dbReference>
<dbReference type="Pfam" id="PF04970">
    <property type="entry name" value="LRAT"/>
    <property type="match status" value="1"/>
</dbReference>
<dbReference type="PROSITE" id="PS51934">
    <property type="entry name" value="LRAT"/>
    <property type="match status" value="1"/>
</dbReference>
<keyword id="KW-0025">Alternative splicing</keyword>
<keyword id="KW-0963">Cytoplasm</keyword>
<keyword id="KW-0378">Hydrolase</keyword>
<keyword id="KW-0442">Lipid degradation</keyword>
<keyword id="KW-0443">Lipid metabolism</keyword>
<keyword id="KW-0472">Membrane</keyword>
<keyword id="KW-0539">Nucleus</keyword>
<keyword id="KW-1185">Reference proteome</keyword>
<keyword id="KW-0808">Transferase</keyword>
<keyword id="KW-0812">Transmembrane</keyword>
<keyword id="KW-1133">Transmembrane helix</keyword>
<name>PLAT1_HUMAN</name>
<organism>
    <name type="scientific">Homo sapiens</name>
    <name type="common">Human</name>
    <dbReference type="NCBI Taxonomy" id="9606"/>
    <lineage>
        <taxon>Eukaryota</taxon>
        <taxon>Metazoa</taxon>
        <taxon>Chordata</taxon>
        <taxon>Craniata</taxon>
        <taxon>Vertebrata</taxon>
        <taxon>Euteleostomi</taxon>
        <taxon>Mammalia</taxon>
        <taxon>Eutheria</taxon>
        <taxon>Euarchontoglires</taxon>
        <taxon>Primates</taxon>
        <taxon>Haplorrhini</taxon>
        <taxon>Catarrhini</taxon>
        <taxon>Hominidae</taxon>
        <taxon>Homo</taxon>
    </lineage>
</organism>
<proteinExistence type="evidence at protein level"/>
<evidence type="ECO:0000250" key="1">
    <source>
        <dbReference type="UniProtKB" id="P53816"/>
    </source>
</evidence>
<evidence type="ECO:0000255" key="2"/>
<evidence type="ECO:0000255" key="3">
    <source>
        <dbReference type="PROSITE-ProRule" id="PRU01283"/>
    </source>
</evidence>
<evidence type="ECO:0000269" key="4">
    <source>
    </source>
</evidence>
<evidence type="ECO:0000269" key="5">
    <source>
    </source>
</evidence>
<evidence type="ECO:0000269" key="6">
    <source>
    </source>
</evidence>
<evidence type="ECO:0000303" key="7">
    <source>
    </source>
</evidence>
<evidence type="ECO:0000303" key="8">
    <source>
    </source>
</evidence>
<evidence type="ECO:0000303" key="9">
    <source>
    </source>
</evidence>
<evidence type="ECO:0000305" key="10"/>
<evidence type="ECO:0000312" key="11">
    <source>
        <dbReference type="HGNC" id="HGNC:14922"/>
    </source>
</evidence>
<comment type="function">
    <text evidence="4 5 6 8">Exhibits both phospholipase A1/2 and acyltransferase activities (PubMed:21880860, PubMed:26503625). Shows phospholipase A1 (PLA1) and A2 (PLA2) activity, catalyzing the calcium-independent release of fatty acids from the sn-1 or sn-2 position of glycerophospholipids (PubMed:21880860, PubMed:22825852, PubMed:27623847). Shows O-acyltransferase activity, catalyzing the transfer of a fatty acyl group from glycerophospholipid to the hydroxyl group of lysophospholipid (PubMed:21880860). Shows N-acyltransferase activity, catalyzing the calcium-independent transfer of a fatty acyl group at the sn-1 position of phosphatidylcholine (PC) and other glycerophospholipids to the primary amine of phosphatidylethanolamine (PE), forming N-acylphosphatidylethanolamine (NAPE) which serves as precursor for N-acylethanolamines (NAEs) (PubMed:21880860, PubMed:22825852, PubMed:27623847).</text>
</comment>
<comment type="catalytic activity">
    <reaction evidence="4 5 6">
        <text>a 1,2-diacyl-sn-glycero-3-phosphocholine + H2O = a 1-acyl-sn-glycero-3-phosphocholine + a fatty acid + H(+)</text>
        <dbReference type="Rhea" id="RHEA:15801"/>
        <dbReference type="ChEBI" id="CHEBI:15377"/>
        <dbReference type="ChEBI" id="CHEBI:15378"/>
        <dbReference type="ChEBI" id="CHEBI:28868"/>
        <dbReference type="ChEBI" id="CHEBI:57643"/>
        <dbReference type="ChEBI" id="CHEBI:58168"/>
        <dbReference type="EC" id="3.1.1.4"/>
    </reaction>
    <physiologicalReaction direction="left-to-right" evidence="4">
        <dbReference type="Rhea" id="RHEA:15802"/>
    </physiologicalReaction>
</comment>
<comment type="catalytic activity">
    <reaction evidence="4 5 6">
        <text>a 1,2-diacyl-sn-glycero-3-phosphocholine + H2O = a 2-acyl-sn-glycero-3-phosphocholine + a fatty acid + H(+)</text>
        <dbReference type="Rhea" id="RHEA:18689"/>
        <dbReference type="ChEBI" id="CHEBI:15377"/>
        <dbReference type="ChEBI" id="CHEBI:15378"/>
        <dbReference type="ChEBI" id="CHEBI:28868"/>
        <dbReference type="ChEBI" id="CHEBI:57643"/>
        <dbReference type="ChEBI" id="CHEBI:57875"/>
        <dbReference type="EC" id="3.1.1.32"/>
    </reaction>
    <physiologicalReaction direction="left-to-right" evidence="4">
        <dbReference type="Rhea" id="RHEA:18690"/>
    </physiologicalReaction>
</comment>
<comment type="catalytic activity">
    <reaction evidence="4">
        <text>1,2-dihexadecanoyl-sn-glycero-3-phosphocholine + H2O = 2-hexadecanoyl-sn-glycero-3-phosphocholine + hexadecanoate + H(+)</text>
        <dbReference type="Rhea" id="RHEA:40487"/>
        <dbReference type="ChEBI" id="CHEBI:7896"/>
        <dbReference type="ChEBI" id="CHEBI:15377"/>
        <dbReference type="ChEBI" id="CHEBI:15378"/>
        <dbReference type="ChEBI" id="CHEBI:72999"/>
        <dbReference type="ChEBI" id="CHEBI:76078"/>
    </reaction>
    <physiologicalReaction direction="left-to-right" evidence="4">
        <dbReference type="Rhea" id="RHEA:40488"/>
    </physiologicalReaction>
</comment>
<comment type="catalytic activity">
    <reaction evidence="4">
        <text>1,2-dihexadecanoyl-sn-glycero-3-phosphocholine + H2O = 1-hexadecanoyl-sn-glycero-3-phosphocholine + hexadecanoate + H(+)</text>
        <dbReference type="Rhea" id="RHEA:41223"/>
        <dbReference type="ChEBI" id="CHEBI:7896"/>
        <dbReference type="ChEBI" id="CHEBI:15377"/>
        <dbReference type="ChEBI" id="CHEBI:15378"/>
        <dbReference type="ChEBI" id="CHEBI:72998"/>
        <dbReference type="ChEBI" id="CHEBI:72999"/>
    </reaction>
    <physiologicalReaction direction="left-to-right" evidence="4">
        <dbReference type="Rhea" id="RHEA:41224"/>
    </physiologicalReaction>
</comment>
<comment type="catalytic activity">
    <reaction evidence="4">
        <text>1-hexadecanoyl-2-(5Z,8Z,11Z,14Z-eicosatetraenoyl)-sn-glycero-3-phosphoethanolamine + H2O = 2-(5Z,8Z,11Z,14Z)-eicosatetraenoyl-sn-glycero-3-phosphoethanolamine + hexadecanoate + H(+)</text>
        <dbReference type="Rhea" id="RHEA:41348"/>
        <dbReference type="ChEBI" id="CHEBI:7896"/>
        <dbReference type="ChEBI" id="CHEBI:15377"/>
        <dbReference type="ChEBI" id="CHEBI:15378"/>
        <dbReference type="ChEBI" id="CHEBI:73009"/>
        <dbReference type="ChEBI" id="CHEBI:76091"/>
    </reaction>
    <physiologicalReaction direction="left-to-right" evidence="4">
        <dbReference type="Rhea" id="RHEA:41349"/>
    </physiologicalReaction>
</comment>
<comment type="catalytic activity">
    <reaction evidence="4">
        <text>1-hexadecanoyl-2-(5Z,8Z,11Z,14Z-eicosatetraenoyl)-sn-glycero-3-phosphoethanolamine + H2O = 1-hexadecanoyl-sn-glycero-3-phosphoethanolamine + (5Z,8Z,11Z,14Z)-eicosatetraenoate + H(+)</text>
        <dbReference type="Rhea" id="RHEA:40431"/>
        <dbReference type="ChEBI" id="CHEBI:15377"/>
        <dbReference type="ChEBI" id="CHEBI:15378"/>
        <dbReference type="ChEBI" id="CHEBI:32395"/>
        <dbReference type="ChEBI" id="CHEBI:73004"/>
        <dbReference type="ChEBI" id="CHEBI:73009"/>
    </reaction>
    <physiologicalReaction direction="left-to-right" evidence="4">
        <dbReference type="Rhea" id="RHEA:40432"/>
    </physiologicalReaction>
</comment>
<comment type="catalytic activity">
    <reaction evidence="4 5">
        <text>1,2-di-(9Z-octadecenoyl)-sn-glycero-3-phosphoethanolamine + 1,2-dihexadecanoyl-sn-glycero-3-phosphocholine = hexadecanoyl-sn-glycero-3-phosphocholine + N-hexadecanoyl-1,2-di-(9Z-octadecenoyl)-sn-glycero-3-phosphoethanolamine + H(+)</text>
        <dbReference type="Rhea" id="RHEA:41360"/>
        <dbReference type="ChEBI" id="CHEBI:15378"/>
        <dbReference type="ChEBI" id="CHEBI:64563"/>
        <dbReference type="ChEBI" id="CHEBI:72999"/>
        <dbReference type="ChEBI" id="CHEBI:74986"/>
        <dbReference type="ChEBI" id="CHEBI:78097"/>
    </reaction>
    <physiologicalReaction direction="left-to-right" evidence="4 5">
        <dbReference type="Rhea" id="RHEA:41361"/>
    </physiologicalReaction>
</comment>
<comment type="catalytic activity">
    <reaction evidence="4">
        <text>1,2-dihexadecanoyl-sn-glycero-3-phosphocholine + a 2-acyl-sn-glycero-3-phosphocholine = a 1-hexadecanoyl-2-acyl-sn-glycero-3-phosphocholine + 2-hexadecanoyl-sn-glycero-3-phosphocholine</text>
        <dbReference type="Rhea" id="RHEA:41364"/>
        <dbReference type="ChEBI" id="CHEBI:57875"/>
        <dbReference type="ChEBI" id="CHEBI:72999"/>
        <dbReference type="ChEBI" id="CHEBI:76078"/>
        <dbReference type="ChEBI" id="CHEBI:77369"/>
    </reaction>
    <physiologicalReaction direction="left-to-right" evidence="4">
        <dbReference type="Rhea" id="RHEA:41365"/>
    </physiologicalReaction>
</comment>
<comment type="interaction">
    <interactant intactId="EBI-12387058">
        <id>Q9HDD0</id>
    </interactant>
    <interactant intactId="EBI-10261970">
        <id>Q8IW40</id>
        <label>CCDC103</label>
    </interactant>
    <organismsDiffer>false</organismsDiffer>
    <experiments>3</experiments>
</comment>
<comment type="interaction">
    <interactant intactId="EBI-12387058">
        <id>Q9HDD0</id>
    </interactant>
    <interactant intactId="EBI-751540">
        <id>O95872</id>
        <label>GPANK1</label>
    </interactant>
    <organismsDiffer>false</organismsDiffer>
    <experiments>3</experiments>
</comment>
<comment type="interaction">
    <interactant intactId="EBI-12387058">
        <id>Q9HDD0</id>
    </interactant>
    <interactant intactId="EBI-740220">
        <id>O14964</id>
        <label>HGS</label>
    </interactant>
    <organismsDiffer>false</organismsDiffer>
    <experiments>3</experiments>
</comment>
<comment type="interaction">
    <interactant intactId="EBI-12387058">
        <id>Q9HDD0</id>
    </interactant>
    <interactant intactId="EBI-12029004">
        <id>P78424</id>
        <label>POU6F2</label>
    </interactant>
    <organismsDiffer>false</organismsDiffer>
    <experiments>3</experiments>
</comment>
<comment type="interaction">
    <interactant intactId="EBI-12387058">
        <id>Q9HDD0</id>
    </interactant>
    <interactant intactId="EBI-3939165">
        <id>O43711</id>
        <label>TLX3</label>
    </interactant>
    <organismsDiffer>false</organismsDiffer>
    <experiments>3</experiments>
</comment>
<comment type="interaction">
    <interactant intactId="EBI-12387058">
        <id>Q9HDD0</id>
    </interactant>
    <interactant intactId="EBI-741480">
        <id>Q9UMX0</id>
        <label>UBQLN1</label>
    </interactant>
    <organismsDiffer>false</organismsDiffer>
    <experiments>3</experiments>
</comment>
<comment type="interaction">
    <interactant intactId="EBI-12387058">
        <id>Q9HDD0</id>
    </interactant>
    <interactant intactId="EBI-11963196">
        <id>Q15915</id>
        <label>ZIC1</label>
    </interactant>
    <organismsDiffer>false</organismsDiffer>
    <experiments>3</experiments>
</comment>
<comment type="subcellular location">
    <molecule>Isoform 1</molecule>
    <subcellularLocation>
        <location evidence="2">Membrane</location>
        <topology evidence="2">Single-pass membrane protein</topology>
    </subcellularLocation>
    <subcellularLocation>
        <location evidence="6">Cytoplasm</location>
    </subcellularLocation>
</comment>
<comment type="subcellular location">
    <molecule>Isoform 2</molecule>
    <subcellularLocation>
        <location evidence="6">Nucleus</location>
    </subcellularLocation>
    <subcellularLocation>
        <location evidence="6">Cytoplasm</location>
    </subcellularLocation>
</comment>
<comment type="alternative products">
    <event type="alternative splicing"/>
    <isoform>
        <id>Q9HDD0-1</id>
        <name>1</name>
        <name evidence="9">PLAAT-1S</name>
        <sequence type="displayed"/>
    </isoform>
    <isoform>
        <id>Q9HDD0-2</id>
        <name>2</name>
        <name evidence="9">PLAAT-1L</name>
        <sequence type="described" ref="VSP_060190"/>
    </isoform>
</comment>
<comment type="tissue specificity">
    <molecule>Isoform 1</molecule>
    <text evidence="4">Abundantly expressed in testis, skeletal muscle, brain, and heart.</text>
</comment>
<comment type="tissue specificity">
    <molecule>Isoform 2</molecule>
    <text evidence="6">Highly expressed in the testis, skeletal muscle, brain, heart, and thyroid.</text>
</comment>
<comment type="similarity">
    <text evidence="10">Belongs to the H-rev107 family.</text>
</comment>
<feature type="chain" id="PRO_0000152481" description="Phospholipase A and acyltransferase 1">
    <location>
        <begin position="1"/>
        <end position="168"/>
    </location>
</feature>
<feature type="topological domain" description="Cytoplasmic" evidence="2">
    <location>
        <begin position="1"/>
        <end position="138"/>
    </location>
</feature>
<feature type="transmembrane region" description="Helical" evidence="2">
    <location>
        <begin position="139"/>
        <end position="159"/>
    </location>
</feature>
<feature type="topological domain" description="Lumenal" evidence="2">
    <location>
        <begin position="160"/>
        <end position="168"/>
    </location>
</feature>
<feature type="domain" description="LRAT" evidence="3">
    <location>
        <begin position="20"/>
        <end position="135"/>
    </location>
</feature>
<feature type="active site" evidence="1">
    <location>
        <position position="30"/>
    </location>
</feature>
<feature type="active site" description="Acyl-thioester intermediate" evidence="1">
    <location>
        <position position="119"/>
    </location>
</feature>
<feature type="splice variant" id="VSP_060190" description="In isoform 2.">
    <original>M</original>
    <variation>MVRASCRLGSARTPSPARRPPGVRASQSRGGAAGTVSAWRRWCWRWPWRTAPSDGWRLPPGCLPGTDGVVPRPPAARSAAARPRETPGHTQLPPGARRRPRLESEM</variation>
    <location>
        <position position="1"/>
    </location>
</feature>
<feature type="sequence conflict" description="In Ref. 2; AAP20056." evidence="10" ref="2">
    <original>S</original>
    <variation>P</variation>
    <location>
        <position position="58"/>
    </location>
</feature>
<feature type="sequence conflict" description="In Ref. 6; AAH48095." evidence="10" ref="6">
    <original>N</original>
    <variation>D</variation>
    <location>
        <position position="118"/>
    </location>
</feature>
<protein>
    <recommendedName>
        <fullName evidence="11">Phospholipase A and acyltransferase 1</fullName>
        <ecNumber evidence="4 5 6">2.3.1.-</ecNumber>
        <ecNumber evidence="4 5 6">3.1.1.32</ecNumber>
        <ecNumber evidence="4 5 6">3.1.1.4</ecNumber>
    </recommendedName>
    <alternativeName>
        <fullName>HRAS-like suppressor 1</fullName>
        <shortName>HRSL1</shortName>
    </alternativeName>
    <alternativeName>
        <fullName evidence="7">Phospholipid-metabolizing enzyme A-C1</fullName>
    </alternativeName>
</protein>
<sequence length="168" mass="18750">MAFNDCFSLNYPGNPCPGDLIEVFRPGYQHWALYLGDGYVINIAPVDGIPASFTSAKSVFSSKALVKMQLLKDVVGNDTYRINNKYDETYPPLPVEEIIKRSEFVIGQEVAYNLLVNNCEHFVTLLRYGEGVSEQANRAISTVEFVTAAVGVFSFLGLFPKGQRAKYY</sequence>